<protein>
    <recommendedName>
        <fullName evidence="1">Probable transcriptional regulatory protein SEQ_1904</fullName>
    </recommendedName>
</protein>
<sequence>MGRKWANIVAKKTAKDGATSKVYAKFGVEIYVAAKQGEPDPELNTALKFVIDRAKQAQVPKHVIDKAIDKAKGNTDETFVEGRYEGFGPNGSMIIVDTLTSNVNRTAANVRAAYGKNGGNMGAAGSVSYLFDKKGVIVFKGDDADSIFELLLEADVDVDDVEAEDGSITVYTAPTDLHKAILALRESGISEFQVTELEMIPQSEVTLEGDDLAVFEKLVDALEADDDVQKVYHNVADV</sequence>
<reference key="1">
    <citation type="journal article" date="2009" name="PLoS Pathog.">
        <title>Genomic evidence for the evolution of Streptococcus equi: host restriction, increased virulence, and genetic exchange with human pathogens.</title>
        <authorList>
            <person name="Holden M.T.G."/>
            <person name="Heather Z."/>
            <person name="Paillot R."/>
            <person name="Steward K.F."/>
            <person name="Webb K."/>
            <person name="Ainslie F."/>
            <person name="Jourdan T."/>
            <person name="Bason N.C."/>
            <person name="Holroyd N.E."/>
            <person name="Mungall K."/>
            <person name="Quail M.A."/>
            <person name="Sanders M."/>
            <person name="Simmonds M."/>
            <person name="Willey D."/>
            <person name="Brooks K."/>
            <person name="Aanensen D.M."/>
            <person name="Spratt B.G."/>
            <person name="Jolley K.A."/>
            <person name="Maiden M.C.J."/>
            <person name="Kehoe M."/>
            <person name="Chanter N."/>
            <person name="Bentley S.D."/>
            <person name="Robinson C."/>
            <person name="Maskell D.J."/>
            <person name="Parkhill J."/>
            <person name="Waller A.S."/>
        </authorList>
    </citation>
    <scope>NUCLEOTIDE SEQUENCE [LARGE SCALE GENOMIC DNA]</scope>
    <source>
        <strain>4047</strain>
    </source>
</reference>
<comment type="subcellular location">
    <subcellularLocation>
        <location evidence="1">Cytoplasm</location>
    </subcellularLocation>
</comment>
<comment type="similarity">
    <text evidence="1">Belongs to the TACO1 family. YeeN subfamily.</text>
</comment>
<feature type="chain" id="PRO_1000200110" description="Probable transcriptional regulatory protein SEQ_1904">
    <location>
        <begin position="1"/>
        <end position="238"/>
    </location>
</feature>
<gene>
    <name type="ordered locus">SEQ_1904</name>
</gene>
<dbReference type="EMBL" id="FM204883">
    <property type="protein sequence ID" value="CAW95104.1"/>
    <property type="molecule type" value="Genomic_DNA"/>
</dbReference>
<dbReference type="RefSeq" id="WP_012516266.1">
    <property type="nucleotide sequence ID" value="NC_012471.1"/>
</dbReference>
<dbReference type="SMR" id="C0M831"/>
<dbReference type="KEGG" id="seu:SEQ_1904"/>
<dbReference type="HOGENOM" id="CLU_062974_2_0_9"/>
<dbReference type="OrthoDB" id="9781053at2"/>
<dbReference type="Proteomes" id="UP000001365">
    <property type="component" value="Chromosome"/>
</dbReference>
<dbReference type="GO" id="GO:0005829">
    <property type="term" value="C:cytosol"/>
    <property type="evidence" value="ECO:0007669"/>
    <property type="project" value="TreeGrafter"/>
</dbReference>
<dbReference type="GO" id="GO:0003677">
    <property type="term" value="F:DNA binding"/>
    <property type="evidence" value="ECO:0007669"/>
    <property type="project" value="UniProtKB-UniRule"/>
</dbReference>
<dbReference type="GO" id="GO:0006355">
    <property type="term" value="P:regulation of DNA-templated transcription"/>
    <property type="evidence" value="ECO:0007669"/>
    <property type="project" value="UniProtKB-UniRule"/>
</dbReference>
<dbReference type="FunFam" id="1.10.10.200:FF:000003">
    <property type="entry name" value="Probable transcriptional regulatory protein YeeN"/>
    <property type="match status" value="1"/>
</dbReference>
<dbReference type="FunFam" id="3.30.70.980:FF:000004">
    <property type="entry name" value="Probable transcriptional regulatory protein YeeN"/>
    <property type="match status" value="1"/>
</dbReference>
<dbReference type="Gene3D" id="1.10.10.200">
    <property type="match status" value="1"/>
</dbReference>
<dbReference type="Gene3D" id="3.30.70.980">
    <property type="match status" value="2"/>
</dbReference>
<dbReference type="HAMAP" id="MF_00693">
    <property type="entry name" value="Transcrip_reg_TACO1"/>
    <property type="match status" value="1"/>
</dbReference>
<dbReference type="HAMAP" id="MF_00918">
    <property type="entry name" value="Transcrip_reg_TACO1_YeeN"/>
    <property type="match status" value="1"/>
</dbReference>
<dbReference type="InterPro" id="IPR017856">
    <property type="entry name" value="Integrase-like_N"/>
</dbReference>
<dbReference type="InterPro" id="IPR048300">
    <property type="entry name" value="TACO1_YebC-like_2nd/3rd_dom"/>
</dbReference>
<dbReference type="InterPro" id="IPR049083">
    <property type="entry name" value="TACO1_YebC_N"/>
</dbReference>
<dbReference type="InterPro" id="IPR002876">
    <property type="entry name" value="Transcrip_reg_TACO1-like"/>
</dbReference>
<dbReference type="InterPro" id="IPR026564">
    <property type="entry name" value="Transcrip_reg_TACO1-like_dom3"/>
</dbReference>
<dbReference type="InterPro" id="IPR026562">
    <property type="entry name" value="Transcrip_reg_TACO1_YeeN"/>
</dbReference>
<dbReference type="InterPro" id="IPR029072">
    <property type="entry name" value="YebC-like"/>
</dbReference>
<dbReference type="NCBIfam" id="NF001030">
    <property type="entry name" value="PRK00110.1"/>
    <property type="match status" value="1"/>
</dbReference>
<dbReference type="NCBIfam" id="NF009044">
    <property type="entry name" value="PRK12378.1"/>
    <property type="match status" value="1"/>
</dbReference>
<dbReference type="NCBIfam" id="TIGR01033">
    <property type="entry name" value="YebC/PmpR family DNA-binding transcriptional regulator"/>
    <property type="match status" value="1"/>
</dbReference>
<dbReference type="PANTHER" id="PTHR12532">
    <property type="entry name" value="TRANSLATIONAL ACTIVATOR OF CYTOCHROME C OXIDASE 1"/>
    <property type="match status" value="1"/>
</dbReference>
<dbReference type="PANTHER" id="PTHR12532:SF0">
    <property type="entry name" value="TRANSLATIONAL ACTIVATOR OF CYTOCHROME C OXIDASE 1"/>
    <property type="match status" value="1"/>
</dbReference>
<dbReference type="Pfam" id="PF20772">
    <property type="entry name" value="TACO1_YebC_N"/>
    <property type="match status" value="1"/>
</dbReference>
<dbReference type="Pfam" id="PF01709">
    <property type="entry name" value="Transcrip_reg"/>
    <property type="match status" value="1"/>
</dbReference>
<dbReference type="SUPFAM" id="SSF75625">
    <property type="entry name" value="YebC-like"/>
    <property type="match status" value="1"/>
</dbReference>
<proteinExistence type="inferred from homology"/>
<name>Y1904_STRE4</name>
<keyword id="KW-0963">Cytoplasm</keyword>
<keyword id="KW-0238">DNA-binding</keyword>
<keyword id="KW-0804">Transcription</keyword>
<keyword id="KW-0805">Transcription regulation</keyword>
<evidence type="ECO:0000255" key="1">
    <source>
        <dbReference type="HAMAP-Rule" id="MF_00918"/>
    </source>
</evidence>
<organism>
    <name type="scientific">Streptococcus equi subsp. equi (strain 4047)</name>
    <dbReference type="NCBI Taxonomy" id="553482"/>
    <lineage>
        <taxon>Bacteria</taxon>
        <taxon>Bacillati</taxon>
        <taxon>Bacillota</taxon>
        <taxon>Bacilli</taxon>
        <taxon>Lactobacillales</taxon>
        <taxon>Streptococcaceae</taxon>
        <taxon>Streptococcus</taxon>
    </lineage>
</organism>
<accession>C0M831</accession>